<gene>
    <name evidence="1" type="primary">rsgA</name>
    <name type="ordered locus">Csal_1269</name>
</gene>
<reference key="1">
    <citation type="journal article" date="2011" name="Stand. Genomic Sci.">
        <title>Complete genome sequence of the halophilic and highly halotolerant Chromohalobacter salexigens type strain (1H11(T)).</title>
        <authorList>
            <person name="Copeland A."/>
            <person name="O'Connor K."/>
            <person name="Lucas S."/>
            <person name="Lapidus A."/>
            <person name="Berry K.W."/>
            <person name="Detter J.C."/>
            <person name="Del Rio T.G."/>
            <person name="Hammon N."/>
            <person name="Dalin E."/>
            <person name="Tice H."/>
            <person name="Pitluck S."/>
            <person name="Bruce D."/>
            <person name="Goodwin L."/>
            <person name="Han C."/>
            <person name="Tapia R."/>
            <person name="Saunders E."/>
            <person name="Schmutz J."/>
            <person name="Brettin T."/>
            <person name="Larimer F."/>
            <person name="Land M."/>
            <person name="Hauser L."/>
            <person name="Vargas C."/>
            <person name="Nieto J.J."/>
            <person name="Kyrpides N.C."/>
            <person name="Ivanova N."/>
            <person name="Goker M."/>
            <person name="Klenk H.P."/>
            <person name="Csonka L.N."/>
            <person name="Woyke T."/>
        </authorList>
    </citation>
    <scope>NUCLEOTIDE SEQUENCE [LARGE SCALE GENOMIC DNA]</scope>
    <source>
        <strain>ATCC BAA-138 / DSM 3043 / CIP 106854 / NCIMB 13768 / 1H11</strain>
    </source>
</reference>
<sequence length="340" mass="37700">MSKRKLSRQQRWRVEKIQAERAERAERRARRDDTSLDAGDYGPERLGRVTAHFGRTLEVEAEDEHGDLQRHRCHLRANLEGLVTGDHVVWRVAADGSGVVVARQPRQSVLERPDARGQLKPVAANIAQILIVFAVEPAPHPNLIDRYLVAAEATGITPVLVLNKTDLLPETGSDLRTLLARYRAIGYRVVAASTQQEGGLDALHACLTERTSVFVGQSGVGKSSLIDRLLPDMQLRVGALSADSRKGTHTTTTATLYHLPAGGELIDSPGIREFGLGHLEEHQVAQGFIEFQPYLGHCRFRDCRHRQEPGCALRDAVERGDILASRFDSYRHIVDGLTTR</sequence>
<evidence type="ECO:0000255" key="1">
    <source>
        <dbReference type="HAMAP-Rule" id="MF_01820"/>
    </source>
</evidence>
<evidence type="ECO:0000255" key="2">
    <source>
        <dbReference type="PROSITE-ProRule" id="PRU01058"/>
    </source>
</evidence>
<evidence type="ECO:0000256" key="3">
    <source>
        <dbReference type="SAM" id="MobiDB-lite"/>
    </source>
</evidence>
<keyword id="KW-0963">Cytoplasm</keyword>
<keyword id="KW-0342">GTP-binding</keyword>
<keyword id="KW-0378">Hydrolase</keyword>
<keyword id="KW-0479">Metal-binding</keyword>
<keyword id="KW-0547">Nucleotide-binding</keyword>
<keyword id="KW-1185">Reference proteome</keyword>
<keyword id="KW-0690">Ribosome biogenesis</keyword>
<keyword id="KW-0694">RNA-binding</keyword>
<keyword id="KW-0699">rRNA-binding</keyword>
<keyword id="KW-0862">Zinc</keyword>
<name>RSGA_CHRSD</name>
<accession>Q1QY34</accession>
<protein>
    <recommendedName>
        <fullName evidence="1">Small ribosomal subunit biogenesis GTPase RsgA</fullName>
        <ecNumber evidence="1">3.6.1.-</ecNumber>
    </recommendedName>
</protein>
<proteinExistence type="inferred from homology"/>
<comment type="function">
    <text evidence="1">One of several proteins that assist in the late maturation steps of the functional core of the 30S ribosomal subunit. Helps release RbfA from mature subunits. May play a role in the assembly of ribosomal proteins into the subunit. Circularly permuted GTPase that catalyzes slow GTP hydrolysis, GTPase activity is stimulated by the 30S ribosomal subunit.</text>
</comment>
<comment type="cofactor">
    <cofactor evidence="1">
        <name>Zn(2+)</name>
        <dbReference type="ChEBI" id="CHEBI:29105"/>
    </cofactor>
    <text evidence="1">Binds 1 zinc ion per subunit.</text>
</comment>
<comment type="subunit">
    <text evidence="1">Monomer. Associates with 30S ribosomal subunit, binds 16S rRNA.</text>
</comment>
<comment type="subcellular location">
    <subcellularLocation>
        <location evidence="1">Cytoplasm</location>
    </subcellularLocation>
</comment>
<comment type="similarity">
    <text evidence="1">Belongs to the TRAFAC class YlqF/YawG GTPase family. RsgA subfamily.</text>
</comment>
<organism>
    <name type="scientific">Chromohalobacter salexigens (strain ATCC BAA-138 / DSM 3043 / CIP 106854 / NCIMB 13768 / 1H11)</name>
    <dbReference type="NCBI Taxonomy" id="290398"/>
    <lineage>
        <taxon>Bacteria</taxon>
        <taxon>Pseudomonadati</taxon>
        <taxon>Pseudomonadota</taxon>
        <taxon>Gammaproteobacteria</taxon>
        <taxon>Oceanospirillales</taxon>
        <taxon>Halomonadaceae</taxon>
        <taxon>Chromohalobacter</taxon>
    </lineage>
</organism>
<feature type="chain" id="PRO_1000188043" description="Small ribosomal subunit biogenesis GTPase RsgA">
    <location>
        <begin position="1"/>
        <end position="340"/>
    </location>
</feature>
<feature type="domain" description="CP-type G" evidence="2">
    <location>
        <begin position="116"/>
        <end position="274"/>
    </location>
</feature>
<feature type="region of interest" description="Disordered" evidence="3">
    <location>
        <begin position="20"/>
        <end position="42"/>
    </location>
</feature>
<feature type="compositionally biased region" description="Basic and acidic residues" evidence="3">
    <location>
        <begin position="20"/>
        <end position="34"/>
    </location>
</feature>
<feature type="binding site" evidence="1">
    <location>
        <begin position="163"/>
        <end position="166"/>
    </location>
    <ligand>
        <name>GTP</name>
        <dbReference type="ChEBI" id="CHEBI:37565"/>
    </ligand>
</feature>
<feature type="binding site" evidence="1">
    <location>
        <begin position="216"/>
        <end position="224"/>
    </location>
    <ligand>
        <name>GTP</name>
        <dbReference type="ChEBI" id="CHEBI:37565"/>
    </ligand>
</feature>
<feature type="binding site" evidence="1">
    <location>
        <position position="298"/>
    </location>
    <ligand>
        <name>Zn(2+)</name>
        <dbReference type="ChEBI" id="CHEBI:29105"/>
    </ligand>
</feature>
<feature type="binding site" evidence="1">
    <location>
        <position position="303"/>
    </location>
    <ligand>
        <name>Zn(2+)</name>
        <dbReference type="ChEBI" id="CHEBI:29105"/>
    </ligand>
</feature>
<feature type="binding site" evidence="1">
    <location>
        <position position="305"/>
    </location>
    <ligand>
        <name>Zn(2+)</name>
        <dbReference type="ChEBI" id="CHEBI:29105"/>
    </ligand>
</feature>
<feature type="binding site" evidence="1">
    <location>
        <position position="311"/>
    </location>
    <ligand>
        <name>Zn(2+)</name>
        <dbReference type="ChEBI" id="CHEBI:29105"/>
    </ligand>
</feature>
<dbReference type="EC" id="3.6.1.-" evidence="1"/>
<dbReference type="EMBL" id="CP000285">
    <property type="protein sequence ID" value="ABE58624.1"/>
    <property type="molecule type" value="Genomic_DNA"/>
</dbReference>
<dbReference type="RefSeq" id="WP_011506570.1">
    <property type="nucleotide sequence ID" value="NC_007963.1"/>
</dbReference>
<dbReference type="SMR" id="Q1QY34"/>
<dbReference type="STRING" id="290398.Csal_1269"/>
<dbReference type="GeneID" id="95334009"/>
<dbReference type="KEGG" id="csa:Csal_1269"/>
<dbReference type="eggNOG" id="COG1162">
    <property type="taxonomic scope" value="Bacteria"/>
</dbReference>
<dbReference type="HOGENOM" id="CLU_033617_2_0_6"/>
<dbReference type="OrthoDB" id="9809485at2"/>
<dbReference type="Proteomes" id="UP000000239">
    <property type="component" value="Chromosome"/>
</dbReference>
<dbReference type="GO" id="GO:0005737">
    <property type="term" value="C:cytoplasm"/>
    <property type="evidence" value="ECO:0007669"/>
    <property type="project" value="UniProtKB-SubCell"/>
</dbReference>
<dbReference type="GO" id="GO:0005525">
    <property type="term" value="F:GTP binding"/>
    <property type="evidence" value="ECO:0007669"/>
    <property type="project" value="UniProtKB-UniRule"/>
</dbReference>
<dbReference type="GO" id="GO:0003924">
    <property type="term" value="F:GTPase activity"/>
    <property type="evidence" value="ECO:0007669"/>
    <property type="project" value="UniProtKB-UniRule"/>
</dbReference>
<dbReference type="GO" id="GO:0046872">
    <property type="term" value="F:metal ion binding"/>
    <property type="evidence" value="ECO:0007669"/>
    <property type="project" value="UniProtKB-KW"/>
</dbReference>
<dbReference type="GO" id="GO:0019843">
    <property type="term" value="F:rRNA binding"/>
    <property type="evidence" value="ECO:0007669"/>
    <property type="project" value="UniProtKB-KW"/>
</dbReference>
<dbReference type="GO" id="GO:0042274">
    <property type="term" value="P:ribosomal small subunit biogenesis"/>
    <property type="evidence" value="ECO:0007669"/>
    <property type="project" value="UniProtKB-UniRule"/>
</dbReference>
<dbReference type="CDD" id="cd01854">
    <property type="entry name" value="YjeQ_EngC"/>
    <property type="match status" value="1"/>
</dbReference>
<dbReference type="Gene3D" id="2.40.50.140">
    <property type="entry name" value="Nucleic acid-binding proteins"/>
    <property type="match status" value="1"/>
</dbReference>
<dbReference type="Gene3D" id="3.40.50.300">
    <property type="entry name" value="P-loop containing nucleotide triphosphate hydrolases"/>
    <property type="match status" value="1"/>
</dbReference>
<dbReference type="Gene3D" id="1.10.40.50">
    <property type="entry name" value="Probable gtpase engc, domain 3"/>
    <property type="match status" value="1"/>
</dbReference>
<dbReference type="HAMAP" id="MF_01820">
    <property type="entry name" value="GTPase_RsgA"/>
    <property type="match status" value="1"/>
</dbReference>
<dbReference type="InterPro" id="IPR030378">
    <property type="entry name" value="G_CP_dom"/>
</dbReference>
<dbReference type="InterPro" id="IPR012340">
    <property type="entry name" value="NA-bd_OB-fold"/>
</dbReference>
<dbReference type="InterPro" id="IPR027417">
    <property type="entry name" value="P-loop_NTPase"/>
</dbReference>
<dbReference type="InterPro" id="IPR004881">
    <property type="entry name" value="Ribosome_biogen_GTPase_RsgA"/>
</dbReference>
<dbReference type="InterPro" id="IPR010914">
    <property type="entry name" value="RsgA_GTPase_dom"/>
</dbReference>
<dbReference type="NCBIfam" id="NF008931">
    <property type="entry name" value="PRK12288.1"/>
    <property type="match status" value="1"/>
</dbReference>
<dbReference type="NCBIfam" id="TIGR00157">
    <property type="entry name" value="ribosome small subunit-dependent GTPase A"/>
    <property type="match status" value="1"/>
</dbReference>
<dbReference type="PANTHER" id="PTHR32120">
    <property type="entry name" value="SMALL RIBOSOMAL SUBUNIT BIOGENESIS GTPASE RSGA"/>
    <property type="match status" value="1"/>
</dbReference>
<dbReference type="PANTHER" id="PTHR32120:SF11">
    <property type="entry name" value="SMALL RIBOSOMAL SUBUNIT BIOGENESIS GTPASE RSGA 1, MITOCHONDRIAL-RELATED"/>
    <property type="match status" value="1"/>
</dbReference>
<dbReference type="Pfam" id="PF03193">
    <property type="entry name" value="RsgA_GTPase"/>
    <property type="match status" value="1"/>
</dbReference>
<dbReference type="SUPFAM" id="SSF52540">
    <property type="entry name" value="P-loop containing nucleoside triphosphate hydrolases"/>
    <property type="match status" value="1"/>
</dbReference>
<dbReference type="PROSITE" id="PS50936">
    <property type="entry name" value="ENGC_GTPASE"/>
    <property type="match status" value="1"/>
</dbReference>
<dbReference type="PROSITE" id="PS51721">
    <property type="entry name" value="G_CP"/>
    <property type="match status" value="1"/>
</dbReference>